<reference key="1">
    <citation type="journal article" date="2004" name="Genome Res.">
        <title>The status, quality, and expansion of the NIH full-length cDNA project: the Mammalian Gene Collection (MGC).</title>
        <authorList>
            <consortium name="The MGC Project Team"/>
        </authorList>
    </citation>
    <scope>NUCLEOTIDE SEQUENCE [LARGE SCALE MRNA]</scope>
    <source>
        <strain>C57BL/6J</strain>
        <tissue>Brain</tissue>
    </source>
</reference>
<reference key="2">
    <citation type="journal article" date="2014" name="Mol. Cell. Proteomics">
        <title>Immunoaffinity enrichment and mass spectrometry analysis of protein methylation.</title>
        <authorList>
            <person name="Guo A."/>
            <person name="Gu H."/>
            <person name="Zhou J."/>
            <person name="Mulhern D."/>
            <person name="Wang Y."/>
            <person name="Lee K.A."/>
            <person name="Yang V."/>
            <person name="Aguiar M."/>
            <person name="Kornhauser J."/>
            <person name="Jia X."/>
            <person name="Ren J."/>
            <person name="Beausoleil S.A."/>
            <person name="Silva J.C."/>
            <person name="Vemulapalli V."/>
            <person name="Bedford M.T."/>
            <person name="Comb M.J."/>
        </authorList>
    </citation>
    <scope>METHYLATION [LARGE SCALE ANALYSIS] AT ARG-7</scope>
    <scope>IDENTIFICATION BY MASS SPECTROMETRY [LARGE SCALE ANALYSIS]</scope>
    <source>
        <tissue>Brain</tissue>
    </source>
</reference>
<reference key="3">
    <citation type="journal article" date="2024" name="Proc. Natl. Acad. Sci. U.S.A.">
        <title>Identification of FBLL1 as a neuron-specific RNA 2'-O-methyltransferase mediating neuronal differentiation.</title>
        <authorList>
            <person name="Zhang D."/>
            <person name="Li B."/>
            <person name="Xu H."/>
            <person name="Li J."/>
            <person name="Ma C."/>
            <person name="Ge W."/>
            <person name="Lu C."/>
            <person name="Cao X."/>
        </authorList>
    </citation>
    <scope>FUNCTION</scope>
    <scope>CATALYTIC ACTIVITY</scope>
    <scope>SUBCELLULAR LOCATION</scope>
</reference>
<organism>
    <name type="scientific">Mus musculus</name>
    <name type="common">Mouse</name>
    <dbReference type="NCBI Taxonomy" id="10090"/>
    <lineage>
        <taxon>Eukaryota</taxon>
        <taxon>Metazoa</taxon>
        <taxon>Chordata</taxon>
        <taxon>Craniata</taxon>
        <taxon>Vertebrata</taxon>
        <taxon>Euteleostomi</taxon>
        <taxon>Mammalia</taxon>
        <taxon>Eutheria</taxon>
        <taxon>Euarchontoglires</taxon>
        <taxon>Glires</taxon>
        <taxon>Rodentia</taxon>
        <taxon>Myomorpha</taxon>
        <taxon>Muroidea</taxon>
        <taxon>Muridae</taxon>
        <taxon>Murinae</taxon>
        <taxon>Mus</taxon>
        <taxon>Mus</taxon>
    </lineage>
</organism>
<accession>Q80WS3</accession>
<gene>
    <name evidence="8" type="primary">Fbll1</name>
</gene>
<dbReference type="EC" id="2.1.1.-" evidence="5"/>
<dbReference type="EMBL" id="BC052068">
    <property type="protein sequence ID" value="AAH52068.1"/>
    <property type="molecule type" value="mRNA"/>
</dbReference>
<dbReference type="CCDS" id="CCDS36128.1"/>
<dbReference type="RefSeq" id="NP_001004147.1">
    <property type="nucleotide sequence ID" value="NM_001004147.3"/>
</dbReference>
<dbReference type="SMR" id="Q80WS3"/>
<dbReference type="BioGRID" id="231898">
    <property type="interactions" value="3"/>
</dbReference>
<dbReference type="FunCoup" id="Q80WS3">
    <property type="interactions" value="344"/>
</dbReference>
<dbReference type="STRING" id="10090.ENSMUSP00000128889"/>
<dbReference type="iPTMnet" id="Q80WS3"/>
<dbReference type="PhosphoSitePlus" id="Q80WS3"/>
<dbReference type="jPOST" id="Q80WS3"/>
<dbReference type="PaxDb" id="10090-ENSMUSP00000128889"/>
<dbReference type="PeptideAtlas" id="Q80WS3"/>
<dbReference type="ProteomicsDB" id="271871"/>
<dbReference type="Pumba" id="Q80WS3"/>
<dbReference type="Antibodypedia" id="71194">
    <property type="antibodies" value="3 antibodies from 3 providers"/>
</dbReference>
<dbReference type="DNASU" id="237730"/>
<dbReference type="Ensembl" id="ENSMUST00000160726.4">
    <property type="protein sequence ID" value="ENSMUSP00000128889.2"/>
    <property type="gene ID" value="ENSMUSG00000051062.7"/>
</dbReference>
<dbReference type="GeneID" id="237730"/>
<dbReference type="KEGG" id="mmu:237730"/>
<dbReference type="UCSC" id="uc007ilg.1">
    <property type="organism name" value="mouse"/>
</dbReference>
<dbReference type="AGR" id="MGI:3034689"/>
<dbReference type="CTD" id="345630"/>
<dbReference type="MGI" id="MGI:3034689">
    <property type="gene designation" value="Fbll1"/>
</dbReference>
<dbReference type="VEuPathDB" id="HostDB:ENSMUSG00000051062"/>
<dbReference type="eggNOG" id="KOG1596">
    <property type="taxonomic scope" value="Eukaryota"/>
</dbReference>
<dbReference type="GeneTree" id="ENSGT00550000074792"/>
<dbReference type="HOGENOM" id="CLU_059055_1_0_1"/>
<dbReference type="InParanoid" id="Q80WS3"/>
<dbReference type="OMA" id="EKQEYRT"/>
<dbReference type="OrthoDB" id="1859733at2759"/>
<dbReference type="PhylomeDB" id="Q80WS3"/>
<dbReference type="TreeFam" id="TF300639"/>
<dbReference type="BioGRID-ORCS" id="237730">
    <property type="hits" value="1 hit in 76 CRISPR screens"/>
</dbReference>
<dbReference type="PRO" id="PR:Q80WS3"/>
<dbReference type="Proteomes" id="UP000000589">
    <property type="component" value="Chromosome 11"/>
</dbReference>
<dbReference type="RNAct" id="Q80WS3">
    <property type="molecule type" value="protein"/>
</dbReference>
<dbReference type="Bgee" id="ENSMUSG00000051062">
    <property type="expression patterns" value="Expressed in central gray substance of midbrain and 75 other cell types or tissues"/>
</dbReference>
<dbReference type="GO" id="GO:0031428">
    <property type="term" value="C:box C/D methylation guide snoRNP complex"/>
    <property type="evidence" value="ECO:0000314"/>
    <property type="project" value="UniProtKB"/>
</dbReference>
<dbReference type="GO" id="GO:0001650">
    <property type="term" value="C:fibrillar center"/>
    <property type="evidence" value="ECO:0007669"/>
    <property type="project" value="Ensembl"/>
</dbReference>
<dbReference type="GO" id="GO:0005730">
    <property type="term" value="C:nucleolus"/>
    <property type="evidence" value="ECO:0000250"/>
    <property type="project" value="UniProtKB"/>
</dbReference>
<dbReference type="GO" id="GO:0005654">
    <property type="term" value="C:nucleoplasm"/>
    <property type="evidence" value="ECO:0007669"/>
    <property type="project" value="Ensembl"/>
</dbReference>
<dbReference type="GO" id="GO:0062105">
    <property type="term" value="F:RNA 2'-O-methyltransferase activity"/>
    <property type="evidence" value="ECO:0000314"/>
    <property type="project" value="UniProtKB"/>
</dbReference>
<dbReference type="GO" id="GO:0003723">
    <property type="term" value="F:RNA binding"/>
    <property type="evidence" value="ECO:0007669"/>
    <property type="project" value="UniProtKB-KW"/>
</dbReference>
<dbReference type="GO" id="GO:0001835">
    <property type="term" value="P:blastocyst hatching"/>
    <property type="evidence" value="ECO:0000315"/>
    <property type="project" value="MGI"/>
</dbReference>
<dbReference type="GO" id="GO:0032259">
    <property type="term" value="P:methylation"/>
    <property type="evidence" value="ECO:0007669"/>
    <property type="project" value="UniProtKB-KW"/>
</dbReference>
<dbReference type="GO" id="GO:0048255">
    <property type="term" value="P:mRNA stabilization"/>
    <property type="evidence" value="ECO:0000315"/>
    <property type="project" value="UniProtKB"/>
</dbReference>
<dbReference type="GO" id="GO:0006364">
    <property type="term" value="P:rRNA processing"/>
    <property type="evidence" value="ECO:0007669"/>
    <property type="project" value="UniProtKB-KW"/>
</dbReference>
<dbReference type="FunFam" id="3.30.200.20:FF:000056">
    <property type="entry name" value="Fibrillarin like 1"/>
    <property type="match status" value="1"/>
</dbReference>
<dbReference type="FunFam" id="3.40.50.150:FF:000001">
    <property type="entry name" value="Fibrillarin like 1"/>
    <property type="match status" value="1"/>
</dbReference>
<dbReference type="Gene3D" id="3.30.200.20">
    <property type="entry name" value="Phosphorylase Kinase, domain 1"/>
    <property type="match status" value="1"/>
</dbReference>
<dbReference type="Gene3D" id="3.40.50.150">
    <property type="entry name" value="Vaccinia Virus protein VP39"/>
    <property type="match status" value="1"/>
</dbReference>
<dbReference type="HAMAP" id="MF_00351">
    <property type="entry name" value="RNA_methyltransf_FlpA"/>
    <property type="match status" value="1"/>
</dbReference>
<dbReference type="InterPro" id="IPR000692">
    <property type="entry name" value="Fibrillarin"/>
</dbReference>
<dbReference type="InterPro" id="IPR020813">
    <property type="entry name" value="Fibrillarin_CS"/>
</dbReference>
<dbReference type="InterPro" id="IPR029063">
    <property type="entry name" value="SAM-dependent_MTases_sf"/>
</dbReference>
<dbReference type="NCBIfam" id="NF003276">
    <property type="entry name" value="PRK04266.1-2"/>
    <property type="match status" value="1"/>
</dbReference>
<dbReference type="PANTHER" id="PTHR10335">
    <property type="entry name" value="RRNA 2-O-METHYLTRANSFERASE FIBRILLARIN"/>
    <property type="match status" value="1"/>
</dbReference>
<dbReference type="PANTHER" id="PTHR10335:SF6">
    <property type="entry name" value="RRNA_TRNA 2'-O-METHYLTRANSFERASE FIBRILLARIN-LIKE PROTEIN 1"/>
    <property type="match status" value="1"/>
</dbReference>
<dbReference type="Pfam" id="PF01269">
    <property type="entry name" value="Fibrillarin"/>
    <property type="match status" value="1"/>
</dbReference>
<dbReference type="PIRSF" id="PIRSF006540">
    <property type="entry name" value="Nop17p"/>
    <property type="match status" value="1"/>
</dbReference>
<dbReference type="PRINTS" id="PR00052">
    <property type="entry name" value="FIBRILLARIN"/>
</dbReference>
<dbReference type="SMART" id="SM01206">
    <property type="entry name" value="Fibrillarin"/>
    <property type="match status" value="1"/>
</dbReference>
<dbReference type="SUPFAM" id="SSF53335">
    <property type="entry name" value="S-adenosyl-L-methionine-dependent methyltransferases"/>
    <property type="match status" value="1"/>
</dbReference>
<dbReference type="PROSITE" id="PS00566">
    <property type="entry name" value="FIBRILLARIN"/>
    <property type="match status" value="1"/>
</dbReference>
<sequence length="314" mass="33339">MKPAGGRGGWGWGGGKGGSKGGDTGSGTKGGFGARTRGSSGGGRGRGRGGGGGGGGGGGDRQRRGGPGKNKNRRKKGITVSVEPHRHEGVFIYRGAEDALVTLNMVPGVSVYGEKRVTVMENGEKQEYRTWNPFRSKLAAAILGGVDQIHIKPKSKVLYLGAASGTTVSHVSDIIGPDGLVYAVEFSHRAGRDLVNVAKKRTNIIPVLEDARHPLKYRMLIGMVDVIFADVAQPDQSRIVALNAHTFLRNGGHFLISIKANCIDSTASAEAVFASEVRKLQQENLKPQEQLTLEPYERDHAVVVGVYRPPPKSK</sequence>
<proteinExistence type="evidence at protein level"/>
<comment type="function">
    <text evidence="5">S-adenosyl-L-methionine-dependent RNA methyltransferase that catalyzes 2'-hydroxyl ribose methylation in RNAs (PubMed:39570315). Functions as part of box C/D small nucleolar ribonucleoprotein (snoRNP) complexes, where guide snoRNAs ensure methylation specificity through base pairing with RNA substrates (PubMed:39570315). Exhibits broad substrate specificity, methylating multiple sites on ribosomal RNAs (rRNAs) and messenger RNAs (mRNAs) depending on the guide snoRNA incorporated in the complex (PubMed:39570315). Specifically expressed in brain, it regulates the expression of GAP43 by stabilizing its mRNA through methylation and thereby plays an indirect role in neuronal differentiation (PubMed:39570315).</text>
</comment>
<comment type="catalytic activity">
    <reaction evidence="5">
        <text>a ribonucleotide in RNA + S-adenosyl-L-methionine = a 2'-O-methylribonucleotide in RNA + S-adenosyl-L-homocysteine + H(+)</text>
        <dbReference type="Rhea" id="RHEA:58956"/>
        <dbReference type="Rhea" id="RHEA-COMP:15261"/>
        <dbReference type="Rhea" id="RHEA-COMP:15262"/>
        <dbReference type="ChEBI" id="CHEBI:15378"/>
        <dbReference type="ChEBI" id="CHEBI:57856"/>
        <dbReference type="ChEBI" id="CHEBI:59789"/>
        <dbReference type="ChEBI" id="CHEBI:90675"/>
        <dbReference type="ChEBI" id="CHEBI:90676"/>
    </reaction>
    <physiologicalReaction direction="left-to-right" evidence="5">
        <dbReference type="Rhea" id="RHEA:58957"/>
    </physiologicalReaction>
</comment>
<comment type="subunit">
    <text evidence="1">Component of a box C/D small nucleolar ribonucleoprotein (snoRNP) complex composed of FBLL1, SNU13/NHP2L1, NOP56 and NOP58 and a guide snoRNA which mediates 2'-hydroxyl ribose methylation in RNAs.</text>
</comment>
<comment type="subcellular location">
    <subcellularLocation>
        <location evidence="1">Nucleus</location>
        <location evidence="1">Nucleolus</location>
    </subcellularLocation>
</comment>
<comment type="similarity">
    <text evidence="6">Belongs to the methyltransferase superfamily. Fibrillarin family.</text>
</comment>
<name>FBLL1_MOUSE</name>
<feature type="chain" id="PRO_0000331763" description="RNA 2'-O-methyltransferase FBLL1">
    <location>
        <begin position="1"/>
        <end position="314"/>
    </location>
</feature>
<feature type="region of interest" description="Disordered" evidence="4">
    <location>
        <begin position="1"/>
        <end position="82"/>
    </location>
</feature>
<feature type="compositionally biased region" description="Gly residues" evidence="4">
    <location>
        <begin position="1"/>
        <end position="59"/>
    </location>
</feature>
<feature type="compositionally biased region" description="Basic residues" evidence="4">
    <location>
        <begin position="64"/>
        <end position="77"/>
    </location>
</feature>
<feature type="binding site" evidence="3">
    <location>
        <begin position="166"/>
        <end position="167"/>
    </location>
    <ligand>
        <name>S-adenosyl-L-methionine</name>
        <dbReference type="ChEBI" id="CHEBI:59789"/>
    </ligand>
</feature>
<feature type="binding site" evidence="2">
    <location>
        <begin position="185"/>
        <end position="186"/>
    </location>
    <ligand>
        <name>S-adenosyl-L-methionine</name>
        <dbReference type="ChEBI" id="CHEBI:59789"/>
    </ligand>
</feature>
<feature type="binding site" evidence="2">
    <location>
        <begin position="210"/>
        <end position="211"/>
    </location>
    <ligand>
        <name>S-adenosyl-L-methionine</name>
        <dbReference type="ChEBI" id="CHEBI:59789"/>
    </ligand>
</feature>
<feature type="binding site" evidence="2">
    <location>
        <begin position="230"/>
        <end position="233"/>
    </location>
    <ligand>
        <name>S-adenosyl-L-methionine</name>
        <dbReference type="ChEBI" id="CHEBI:59789"/>
    </ligand>
</feature>
<feature type="modified residue" description="Omega-N-methylarginine" evidence="9">
    <location>
        <position position="7"/>
    </location>
</feature>
<evidence type="ECO:0000250" key="1">
    <source>
        <dbReference type="UniProtKB" id="A6NHQ2"/>
    </source>
</evidence>
<evidence type="ECO:0000250" key="2">
    <source>
        <dbReference type="UniProtKB" id="P22087"/>
    </source>
</evidence>
<evidence type="ECO:0000250" key="3">
    <source>
        <dbReference type="UniProtKB" id="Q9Y9U3"/>
    </source>
</evidence>
<evidence type="ECO:0000256" key="4">
    <source>
        <dbReference type="SAM" id="MobiDB-lite"/>
    </source>
</evidence>
<evidence type="ECO:0000269" key="5">
    <source>
    </source>
</evidence>
<evidence type="ECO:0000305" key="6"/>
<evidence type="ECO:0000305" key="7">
    <source>
    </source>
</evidence>
<evidence type="ECO:0000312" key="8">
    <source>
        <dbReference type="MGI" id="MGI:3034689"/>
    </source>
</evidence>
<evidence type="ECO:0007744" key="9">
    <source>
    </source>
</evidence>
<protein>
    <recommendedName>
        <fullName evidence="7">RNA 2'-O-methyltransferase FBLL1</fullName>
        <ecNumber evidence="5">2.1.1.-</ecNumber>
    </recommendedName>
    <alternativeName>
        <fullName evidence="8">Fibrillarin like 1</fullName>
    </alternativeName>
</protein>
<keyword id="KW-0488">Methylation</keyword>
<keyword id="KW-0489">Methyltransferase</keyword>
<keyword id="KW-0539">Nucleus</keyword>
<keyword id="KW-1185">Reference proteome</keyword>
<keyword id="KW-0687">Ribonucleoprotein</keyword>
<keyword id="KW-0694">RNA-binding</keyword>
<keyword id="KW-0698">rRNA processing</keyword>
<keyword id="KW-0949">S-adenosyl-L-methionine</keyword>
<keyword id="KW-0808">Transferase</keyword>